<keyword id="KW-0687">Ribonucleoprotein</keyword>
<keyword id="KW-0689">Ribosomal protein</keyword>
<feature type="chain" id="PRO_1000127364" description="Large ribosomal subunit protein bL35">
    <location>
        <begin position="1"/>
        <end position="65"/>
    </location>
</feature>
<feature type="region of interest" description="Disordered" evidence="2">
    <location>
        <begin position="1"/>
        <end position="22"/>
    </location>
</feature>
<feature type="compositionally biased region" description="Basic residues" evidence="2">
    <location>
        <begin position="10"/>
        <end position="22"/>
    </location>
</feature>
<accession>B5XQC8</accession>
<proteinExistence type="inferred from homology"/>
<dbReference type="EMBL" id="CP000964">
    <property type="protein sequence ID" value="ACI07278.1"/>
    <property type="molecule type" value="Genomic_DNA"/>
</dbReference>
<dbReference type="SMR" id="B5XQC8"/>
<dbReference type="KEGG" id="kpe:KPK_2140"/>
<dbReference type="HOGENOM" id="CLU_169643_1_1_6"/>
<dbReference type="Proteomes" id="UP000001734">
    <property type="component" value="Chromosome"/>
</dbReference>
<dbReference type="GO" id="GO:0022625">
    <property type="term" value="C:cytosolic large ribosomal subunit"/>
    <property type="evidence" value="ECO:0007669"/>
    <property type="project" value="TreeGrafter"/>
</dbReference>
<dbReference type="GO" id="GO:0003735">
    <property type="term" value="F:structural constituent of ribosome"/>
    <property type="evidence" value="ECO:0007669"/>
    <property type="project" value="InterPro"/>
</dbReference>
<dbReference type="GO" id="GO:0006412">
    <property type="term" value="P:translation"/>
    <property type="evidence" value="ECO:0007669"/>
    <property type="project" value="UniProtKB-UniRule"/>
</dbReference>
<dbReference type="FunFam" id="4.10.410.60:FF:000001">
    <property type="entry name" value="50S ribosomal protein L35"/>
    <property type="match status" value="1"/>
</dbReference>
<dbReference type="Gene3D" id="4.10.410.60">
    <property type="match status" value="1"/>
</dbReference>
<dbReference type="HAMAP" id="MF_00514">
    <property type="entry name" value="Ribosomal_bL35"/>
    <property type="match status" value="1"/>
</dbReference>
<dbReference type="InterPro" id="IPR001706">
    <property type="entry name" value="Ribosomal_bL35"/>
</dbReference>
<dbReference type="InterPro" id="IPR021137">
    <property type="entry name" value="Ribosomal_bL35-like"/>
</dbReference>
<dbReference type="InterPro" id="IPR018265">
    <property type="entry name" value="Ribosomal_bL35_CS"/>
</dbReference>
<dbReference type="InterPro" id="IPR037229">
    <property type="entry name" value="Ribosomal_bL35_sf"/>
</dbReference>
<dbReference type="NCBIfam" id="TIGR00001">
    <property type="entry name" value="rpmI_bact"/>
    <property type="match status" value="1"/>
</dbReference>
<dbReference type="PANTHER" id="PTHR33343">
    <property type="entry name" value="54S RIBOSOMAL PROTEIN BL35M"/>
    <property type="match status" value="1"/>
</dbReference>
<dbReference type="PANTHER" id="PTHR33343:SF1">
    <property type="entry name" value="LARGE RIBOSOMAL SUBUNIT PROTEIN BL35M"/>
    <property type="match status" value="1"/>
</dbReference>
<dbReference type="Pfam" id="PF01632">
    <property type="entry name" value="Ribosomal_L35p"/>
    <property type="match status" value="1"/>
</dbReference>
<dbReference type="PRINTS" id="PR00064">
    <property type="entry name" value="RIBOSOMALL35"/>
</dbReference>
<dbReference type="SUPFAM" id="SSF143034">
    <property type="entry name" value="L35p-like"/>
    <property type="match status" value="1"/>
</dbReference>
<dbReference type="PROSITE" id="PS00936">
    <property type="entry name" value="RIBOSOMAL_L35"/>
    <property type="match status" value="1"/>
</dbReference>
<name>RL35_KLEP3</name>
<protein>
    <recommendedName>
        <fullName evidence="1">Large ribosomal subunit protein bL35</fullName>
    </recommendedName>
    <alternativeName>
        <fullName evidence="3">50S ribosomal protein L35</fullName>
    </alternativeName>
</protein>
<gene>
    <name evidence="1" type="primary">rpmI</name>
    <name type="ordered locus">KPK_2140</name>
</gene>
<comment type="similarity">
    <text evidence="1">Belongs to the bacterial ribosomal protein bL35 family.</text>
</comment>
<sequence>MPKIKTVRGAAKRFKKTGKGGFKHKHANLRHILTKKATKRKRHLRPKAMVSKGDLGLVIACLPYA</sequence>
<evidence type="ECO:0000255" key="1">
    <source>
        <dbReference type="HAMAP-Rule" id="MF_00514"/>
    </source>
</evidence>
<evidence type="ECO:0000256" key="2">
    <source>
        <dbReference type="SAM" id="MobiDB-lite"/>
    </source>
</evidence>
<evidence type="ECO:0000305" key="3"/>
<organism>
    <name type="scientific">Klebsiella pneumoniae (strain 342)</name>
    <dbReference type="NCBI Taxonomy" id="507522"/>
    <lineage>
        <taxon>Bacteria</taxon>
        <taxon>Pseudomonadati</taxon>
        <taxon>Pseudomonadota</taxon>
        <taxon>Gammaproteobacteria</taxon>
        <taxon>Enterobacterales</taxon>
        <taxon>Enterobacteriaceae</taxon>
        <taxon>Klebsiella/Raoultella group</taxon>
        <taxon>Klebsiella</taxon>
        <taxon>Klebsiella pneumoniae complex</taxon>
    </lineage>
</organism>
<reference key="1">
    <citation type="journal article" date="2008" name="PLoS Genet.">
        <title>Complete genome sequence of the N2-fixing broad host range endophyte Klebsiella pneumoniae 342 and virulence predictions verified in mice.</title>
        <authorList>
            <person name="Fouts D.E."/>
            <person name="Tyler H.L."/>
            <person name="DeBoy R.T."/>
            <person name="Daugherty S."/>
            <person name="Ren Q."/>
            <person name="Badger J.H."/>
            <person name="Durkin A.S."/>
            <person name="Huot H."/>
            <person name="Shrivastava S."/>
            <person name="Kothari S."/>
            <person name="Dodson R.J."/>
            <person name="Mohamoud Y."/>
            <person name="Khouri H."/>
            <person name="Roesch L.F.W."/>
            <person name="Krogfelt K.A."/>
            <person name="Struve C."/>
            <person name="Triplett E.W."/>
            <person name="Methe B.A."/>
        </authorList>
    </citation>
    <scope>NUCLEOTIDE SEQUENCE [LARGE SCALE GENOMIC DNA]</scope>
    <source>
        <strain>342</strain>
    </source>
</reference>